<protein>
    <recommendedName>
        <fullName evidence="1">Cell division protein FtsB</fullName>
    </recommendedName>
</protein>
<gene>
    <name evidence="1" type="primary">ftsB</name>
    <name type="ordered locus">NMA1496</name>
</gene>
<accession>P64160</accession>
<accession>A1IS93</accession>
<accession>Q9JR95</accession>
<organism>
    <name type="scientific">Neisseria meningitidis serogroup A / serotype 4A (strain DSM 15465 / Z2491)</name>
    <dbReference type="NCBI Taxonomy" id="122587"/>
    <lineage>
        <taxon>Bacteria</taxon>
        <taxon>Pseudomonadati</taxon>
        <taxon>Pseudomonadota</taxon>
        <taxon>Betaproteobacteria</taxon>
        <taxon>Neisseriales</taxon>
        <taxon>Neisseriaceae</taxon>
        <taxon>Neisseria</taxon>
    </lineage>
</organism>
<dbReference type="EMBL" id="AL157959">
    <property type="protein sequence ID" value="CAM08648.1"/>
    <property type="molecule type" value="Genomic_DNA"/>
</dbReference>
<dbReference type="RefSeq" id="WP_002213385.1">
    <property type="nucleotide sequence ID" value="NC_003116.1"/>
</dbReference>
<dbReference type="SMR" id="P64160"/>
<dbReference type="EnsemblBacteria" id="CAM08648">
    <property type="protein sequence ID" value="CAM08648"/>
    <property type="gene ID" value="NMA1496"/>
</dbReference>
<dbReference type="GeneID" id="93385912"/>
<dbReference type="KEGG" id="nma:NMA1496"/>
<dbReference type="HOGENOM" id="CLU_134863_5_2_4"/>
<dbReference type="Proteomes" id="UP000000626">
    <property type="component" value="Chromosome"/>
</dbReference>
<dbReference type="GO" id="GO:0032153">
    <property type="term" value="C:cell division site"/>
    <property type="evidence" value="ECO:0007669"/>
    <property type="project" value="UniProtKB-UniRule"/>
</dbReference>
<dbReference type="GO" id="GO:0030428">
    <property type="term" value="C:cell septum"/>
    <property type="evidence" value="ECO:0007669"/>
    <property type="project" value="TreeGrafter"/>
</dbReference>
<dbReference type="GO" id="GO:0005886">
    <property type="term" value="C:plasma membrane"/>
    <property type="evidence" value="ECO:0007669"/>
    <property type="project" value="UniProtKB-SubCell"/>
</dbReference>
<dbReference type="GO" id="GO:0043093">
    <property type="term" value="P:FtsZ-dependent cytokinesis"/>
    <property type="evidence" value="ECO:0007669"/>
    <property type="project" value="UniProtKB-UniRule"/>
</dbReference>
<dbReference type="HAMAP" id="MF_00599">
    <property type="entry name" value="FtsB"/>
    <property type="match status" value="1"/>
</dbReference>
<dbReference type="InterPro" id="IPR023081">
    <property type="entry name" value="Cell_div_FtsB"/>
</dbReference>
<dbReference type="InterPro" id="IPR007060">
    <property type="entry name" value="FtsL/DivIC"/>
</dbReference>
<dbReference type="NCBIfam" id="NF002058">
    <property type="entry name" value="PRK00888.1"/>
    <property type="match status" value="1"/>
</dbReference>
<dbReference type="PANTHER" id="PTHR37485">
    <property type="entry name" value="CELL DIVISION PROTEIN FTSB"/>
    <property type="match status" value="1"/>
</dbReference>
<dbReference type="PANTHER" id="PTHR37485:SF1">
    <property type="entry name" value="CELL DIVISION PROTEIN FTSB"/>
    <property type="match status" value="1"/>
</dbReference>
<dbReference type="Pfam" id="PF04977">
    <property type="entry name" value="DivIC"/>
    <property type="match status" value="1"/>
</dbReference>
<proteinExistence type="inferred from homology"/>
<name>FTSB_NEIMA</name>
<feature type="chain" id="PRO_0000214449" description="Cell division protein FtsB">
    <location>
        <begin position="1"/>
        <end position="92"/>
    </location>
</feature>
<feature type="topological domain" description="Cytoplasmic" evidence="1">
    <location>
        <begin position="1"/>
        <end position="3"/>
    </location>
</feature>
<feature type="transmembrane region" description="Helical" evidence="1">
    <location>
        <begin position="4"/>
        <end position="21"/>
    </location>
</feature>
<feature type="topological domain" description="Periplasmic" evidence="1">
    <location>
        <begin position="22"/>
        <end position="92"/>
    </location>
</feature>
<feature type="coiled-coil region" evidence="1">
    <location>
        <begin position="28"/>
        <end position="50"/>
    </location>
</feature>
<evidence type="ECO:0000255" key="1">
    <source>
        <dbReference type="HAMAP-Rule" id="MF_00599"/>
    </source>
</evidence>
<sequence>MKWVTVVLSFALVCCQYSLWFGKGSIGRNSSLREQIAVQEEKNQTLALRNHSLAAEVYDLENGQEAISEIARVELGYIQDGETFYRLIRHNR</sequence>
<reference key="1">
    <citation type="journal article" date="2000" name="Nature">
        <title>Complete DNA sequence of a serogroup A strain of Neisseria meningitidis Z2491.</title>
        <authorList>
            <person name="Parkhill J."/>
            <person name="Achtman M."/>
            <person name="James K.D."/>
            <person name="Bentley S.D."/>
            <person name="Churcher C.M."/>
            <person name="Klee S.R."/>
            <person name="Morelli G."/>
            <person name="Basham D."/>
            <person name="Brown D."/>
            <person name="Chillingworth T."/>
            <person name="Davies R.M."/>
            <person name="Davis P."/>
            <person name="Devlin K."/>
            <person name="Feltwell T."/>
            <person name="Hamlin N."/>
            <person name="Holroyd S."/>
            <person name="Jagels K."/>
            <person name="Leather S."/>
            <person name="Moule S."/>
            <person name="Mungall K.L."/>
            <person name="Quail M.A."/>
            <person name="Rajandream M.A."/>
            <person name="Rutherford K.M."/>
            <person name="Simmonds M."/>
            <person name="Skelton J."/>
            <person name="Whitehead S."/>
            <person name="Spratt B.G."/>
            <person name="Barrell B.G."/>
        </authorList>
    </citation>
    <scope>NUCLEOTIDE SEQUENCE [LARGE SCALE GENOMIC DNA]</scope>
    <source>
        <strain>DSM 15465 / Z2491</strain>
    </source>
</reference>
<keyword id="KW-0131">Cell cycle</keyword>
<keyword id="KW-0132">Cell division</keyword>
<keyword id="KW-0997">Cell inner membrane</keyword>
<keyword id="KW-1003">Cell membrane</keyword>
<keyword id="KW-0175">Coiled coil</keyword>
<keyword id="KW-0472">Membrane</keyword>
<keyword id="KW-0812">Transmembrane</keyword>
<keyword id="KW-1133">Transmembrane helix</keyword>
<comment type="function">
    <text evidence="1">Essential cell division protein. May link together the upstream cell division proteins, which are predominantly cytoplasmic, with the downstream cell division proteins, which are predominantly periplasmic.</text>
</comment>
<comment type="subunit">
    <text evidence="1">Part of a complex composed of FtsB, FtsL and FtsQ.</text>
</comment>
<comment type="subcellular location">
    <subcellularLocation>
        <location evidence="1">Cell inner membrane</location>
        <topology evidence="1">Single-pass type II membrane protein</topology>
    </subcellularLocation>
    <text evidence="1">Localizes to the division septum.</text>
</comment>
<comment type="similarity">
    <text evidence="1">Belongs to the FtsB family.</text>
</comment>